<reference key="1">
    <citation type="journal article" date="2000" name="Science">
        <title>Dual signaling regulated by calcyon, a D1 dopamine receptor interacting protein.</title>
        <authorList>
            <person name="Lezcano N."/>
            <person name="Mrzljak L."/>
            <person name="Eubanks S."/>
            <person name="Levenson R."/>
            <person name="Goldman-Rakic P."/>
            <person name="Bergson C."/>
        </authorList>
    </citation>
    <scope>NUCLEOTIDE SEQUENCE [MRNA]</scope>
    <scope>RETRACTED PAPER</scope>
</reference>
<reference key="2">
    <citation type="journal article" date="2006" name="Science">
        <authorList>
            <person name="Lezcano N."/>
            <person name="Mrzljak L."/>
            <person name="Levenson R."/>
            <person name="Bergson C."/>
        </authorList>
    </citation>
    <scope>ERRATUM OF PUBMED:10698743</scope>
    <scope>RETRACTION NOTICE OF PUBMED:10698743</scope>
</reference>
<reference key="3">
    <citation type="journal article" date="2004" name="Nature">
        <title>The DNA sequence and comparative analysis of human chromosome 10.</title>
        <authorList>
            <person name="Deloukas P."/>
            <person name="Earthrowl M.E."/>
            <person name="Grafham D.V."/>
            <person name="Rubenfield M."/>
            <person name="French L."/>
            <person name="Steward C.A."/>
            <person name="Sims S.K."/>
            <person name="Jones M.C."/>
            <person name="Searle S."/>
            <person name="Scott C."/>
            <person name="Howe K."/>
            <person name="Hunt S.E."/>
            <person name="Andrews T.D."/>
            <person name="Gilbert J.G.R."/>
            <person name="Swarbreck D."/>
            <person name="Ashurst J.L."/>
            <person name="Taylor A."/>
            <person name="Battles J."/>
            <person name="Bird C.P."/>
            <person name="Ainscough R."/>
            <person name="Almeida J.P."/>
            <person name="Ashwell R.I.S."/>
            <person name="Ambrose K.D."/>
            <person name="Babbage A.K."/>
            <person name="Bagguley C.L."/>
            <person name="Bailey J."/>
            <person name="Banerjee R."/>
            <person name="Bates K."/>
            <person name="Beasley H."/>
            <person name="Bray-Allen S."/>
            <person name="Brown A.J."/>
            <person name="Brown J.Y."/>
            <person name="Burford D.C."/>
            <person name="Burrill W."/>
            <person name="Burton J."/>
            <person name="Cahill P."/>
            <person name="Camire D."/>
            <person name="Carter N.P."/>
            <person name="Chapman J.C."/>
            <person name="Clark S.Y."/>
            <person name="Clarke G."/>
            <person name="Clee C.M."/>
            <person name="Clegg S."/>
            <person name="Corby N."/>
            <person name="Coulson A."/>
            <person name="Dhami P."/>
            <person name="Dutta I."/>
            <person name="Dunn M."/>
            <person name="Faulkner L."/>
            <person name="Frankish A."/>
            <person name="Frankland J.A."/>
            <person name="Garner P."/>
            <person name="Garnett J."/>
            <person name="Gribble S."/>
            <person name="Griffiths C."/>
            <person name="Grocock R."/>
            <person name="Gustafson E."/>
            <person name="Hammond S."/>
            <person name="Harley J.L."/>
            <person name="Hart E."/>
            <person name="Heath P.D."/>
            <person name="Ho T.P."/>
            <person name="Hopkins B."/>
            <person name="Horne J."/>
            <person name="Howden P.J."/>
            <person name="Huckle E."/>
            <person name="Hynds C."/>
            <person name="Johnson C."/>
            <person name="Johnson D."/>
            <person name="Kana A."/>
            <person name="Kay M."/>
            <person name="Kimberley A.M."/>
            <person name="Kershaw J.K."/>
            <person name="Kokkinaki M."/>
            <person name="Laird G.K."/>
            <person name="Lawlor S."/>
            <person name="Lee H.M."/>
            <person name="Leongamornlert D.A."/>
            <person name="Laird G."/>
            <person name="Lloyd C."/>
            <person name="Lloyd D.M."/>
            <person name="Loveland J."/>
            <person name="Lovell J."/>
            <person name="McLaren S."/>
            <person name="McLay K.E."/>
            <person name="McMurray A."/>
            <person name="Mashreghi-Mohammadi M."/>
            <person name="Matthews L."/>
            <person name="Milne S."/>
            <person name="Nickerson T."/>
            <person name="Nguyen M."/>
            <person name="Overton-Larty E."/>
            <person name="Palmer S.A."/>
            <person name="Pearce A.V."/>
            <person name="Peck A.I."/>
            <person name="Pelan S."/>
            <person name="Phillimore B."/>
            <person name="Porter K."/>
            <person name="Rice C.M."/>
            <person name="Rogosin A."/>
            <person name="Ross M.T."/>
            <person name="Sarafidou T."/>
            <person name="Sehra H.K."/>
            <person name="Shownkeen R."/>
            <person name="Skuce C.D."/>
            <person name="Smith M."/>
            <person name="Standring L."/>
            <person name="Sycamore N."/>
            <person name="Tester J."/>
            <person name="Thorpe A."/>
            <person name="Torcasso W."/>
            <person name="Tracey A."/>
            <person name="Tromans A."/>
            <person name="Tsolas J."/>
            <person name="Wall M."/>
            <person name="Walsh J."/>
            <person name="Wang H."/>
            <person name="Weinstock K."/>
            <person name="West A.P."/>
            <person name="Willey D.L."/>
            <person name="Whitehead S.L."/>
            <person name="Wilming L."/>
            <person name="Wray P.W."/>
            <person name="Young L."/>
            <person name="Chen Y."/>
            <person name="Lovering R.C."/>
            <person name="Moschonas N.K."/>
            <person name="Siebert R."/>
            <person name="Fechtel K."/>
            <person name="Bentley D."/>
            <person name="Durbin R.M."/>
            <person name="Hubbard T."/>
            <person name="Doucette-Stamm L."/>
            <person name="Beck S."/>
            <person name="Smith D.R."/>
            <person name="Rogers J."/>
        </authorList>
    </citation>
    <scope>NUCLEOTIDE SEQUENCE [LARGE SCALE GENOMIC DNA]</scope>
</reference>
<reference key="4">
    <citation type="submission" date="2005-09" db="EMBL/GenBank/DDBJ databases">
        <authorList>
            <person name="Mural R.J."/>
            <person name="Istrail S."/>
            <person name="Sutton G.G."/>
            <person name="Florea L."/>
            <person name="Halpern A.L."/>
            <person name="Mobarry C.M."/>
            <person name="Lippert R."/>
            <person name="Walenz B."/>
            <person name="Shatkay H."/>
            <person name="Dew I."/>
            <person name="Miller J.R."/>
            <person name="Flanigan M.J."/>
            <person name="Edwards N.J."/>
            <person name="Bolanos R."/>
            <person name="Fasulo D."/>
            <person name="Halldorsson B.V."/>
            <person name="Hannenhalli S."/>
            <person name="Turner R."/>
            <person name="Yooseph S."/>
            <person name="Lu F."/>
            <person name="Nusskern D.R."/>
            <person name="Shue B.C."/>
            <person name="Zheng X.H."/>
            <person name="Zhong F."/>
            <person name="Delcher A.L."/>
            <person name="Huson D.H."/>
            <person name="Kravitz S.A."/>
            <person name="Mouchard L."/>
            <person name="Reinert K."/>
            <person name="Remington K.A."/>
            <person name="Clark A.G."/>
            <person name="Waterman M.S."/>
            <person name="Eichler E.E."/>
            <person name="Adams M.D."/>
            <person name="Hunkapiller M.W."/>
            <person name="Myers E.W."/>
            <person name="Venter J.C."/>
        </authorList>
    </citation>
    <scope>NUCLEOTIDE SEQUENCE [LARGE SCALE GENOMIC DNA]</scope>
</reference>
<reference key="5">
    <citation type="journal article" date="2004" name="Genome Res.">
        <title>The status, quality, and expansion of the NIH full-length cDNA project: the Mammalian Gene Collection (MGC).</title>
        <authorList>
            <consortium name="The MGC Project Team"/>
        </authorList>
    </citation>
    <scope>NUCLEOTIDE SEQUENCE [LARGE SCALE MRNA]</scope>
    <source>
        <tissue>Brain</tissue>
    </source>
</reference>
<reference key="6">
    <citation type="journal article" date="2003" name="Arch. Gen. Psychiatry">
        <title>Up-regulation of the D1 dopamine receptor-interacting protein, calcyon, in patients with schizophrenia.</title>
        <authorList>
            <person name="Koh P.O."/>
            <person name="Bergson C."/>
            <person name="Undie A.S."/>
            <person name="Goldman-Rakic P.S."/>
            <person name="Lidow M.S."/>
        </authorList>
    </citation>
    <scope>TISSUE SPECIFICITY</scope>
</reference>
<reference key="7">
    <citation type="journal article" date="2003" name="J. Biol. Chem.">
        <title>Elevated intracellular calcium triggers recruitment of the receptor cross-talk accessory protein calcyon to the plasma membrane.</title>
        <authorList>
            <person name="Ali M.K."/>
            <person name="Bergson C."/>
        </authorList>
    </citation>
    <scope>SUBCELLULAR LOCATION</scope>
</reference>
<reference key="8">
    <citation type="journal article" date="2006" name="J. Biol. Chem.">
        <title>Calcyon, a novel partner of clathrin light chain, stimulates clathrin-mediated endocytosis.</title>
        <authorList>
            <person name="Xiao J."/>
            <person name="Dai R."/>
            <person name="Negyessy L."/>
            <person name="Bergson C."/>
        </authorList>
    </citation>
    <scope>FUNCTION</scope>
    <scope>SUBCELLULAR LOCATION</scope>
    <scope>INTERACTION WITH CLTA</scope>
</reference>
<reference key="9">
    <citation type="journal article" date="2009" name="Nat. Methods">
        <title>Enrichment of glycopeptides for glycan structure and attachment site identification.</title>
        <authorList>
            <person name="Nilsson J."/>
            <person name="Rueetschi U."/>
            <person name="Halim A."/>
            <person name="Hesse C."/>
            <person name="Carlsohn E."/>
            <person name="Brinkmalm G."/>
            <person name="Larson G."/>
        </authorList>
    </citation>
    <scope>GLYCOSYLATION</scope>
    <scope>IDENTIFICATION BY MASS SPECTROMETRY</scope>
</reference>
<reference key="10">
    <citation type="journal article" date="2013" name="J. Proteome Res.">
        <title>LC-MS/MS characterization of O-glycosylation sites and glycan structures of human cerebrospinal fluid glycoproteins.</title>
        <authorList>
            <person name="Halim A."/>
            <person name="Ruetschi U."/>
            <person name="Larson G."/>
            <person name="Nilsson J."/>
        </authorList>
    </citation>
    <scope>GLYCOSYLATION</scope>
    <scope>IDENTIFICATION BY MASS SPECTROMETRY</scope>
</reference>
<comment type="function">
    <text evidence="4">Interacts with clathrin light chain A and stimulates clathrin self-assembly and clathrin-mediated endocytosis.</text>
</comment>
<comment type="subunit">
    <text evidence="4">Interacts with CLTA.</text>
</comment>
<comment type="interaction">
    <interactant intactId="EBI-10904725">
        <id>Q9NYX4</id>
    </interactant>
    <interactant intactId="EBI-1171169">
        <id>P09496</id>
        <label>CLTA</label>
    </interactant>
    <organismsDiffer>false</organismsDiffer>
    <experiments>4</experiments>
</comment>
<comment type="subcellular location">
    <subcellularLocation>
        <location>Cytoplasmic vesicle membrane</location>
        <topology>Single-pass membrane protein</topology>
    </subcellularLocation>
    <subcellularLocation>
        <location>Cell membrane</location>
        <topology>Single-pass membrane protein</topology>
    </subcellularLocation>
</comment>
<comment type="alternative products">
    <event type="alternative splicing"/>
    <isoform>
        <id>Q9NYX4-1</id>
        <name>1</name>
        <sequence type="displayed"/>
    </isoform>
    <isoform>
        <id>Q9NYX4-2</id>
        <name>2</name>
        <sequence type="described" ref="VSP_034474 VSP_034475"/>
    </isoform>
    <isoform>
        <id>Q9NYX4-3</id>
        <name>3</name>
        <sequence type="described" ref="VSP_034473"/>
    </isoform>
</comment>
<comment type="tissue specificity">
    <text evidence="3">Expressed in the pyramidal cells of the prefrontal cortex, in hypothalamus and in caudate nucleus. No expression in spleen. Up-regulated in the prefrontal cortex of schizophrenic patients with nearly twice the levels of non-schizophrenics.</text>
</comment>
<comment type="PTM">
    <text evidence="7 8">Glycosylated.</text>
</comment>
<comment type="similarity">
    <text evidence="5">Belongs to the NSG family.</text>
</comment>
<comment type="caution">
    <text evidence="6">Was originally thought to interact with the D1 dopamine receptor (DRD1) and to play a role in potentiating calcium ion-dependent signaling but this work was later retracted.</text>
</comment>
<comment type="caution">
    <text evidence="7 8">In cerebrospinal fluid (CSF), found to be O-glycosylated in the predicted intracellular region at Thr-180 and Thr-189 (PubMed:19838169). This glycosylation has been confirmed by a separate mass spectrometry (MS) method (PubMed:23234360). Glycosylation in this region of the protein is unexplained as yet.</text>
</comment>
<name>CALY_HUMAN</name>
<protein>
    <recommendedName>
        <fullName>Neuron-specific vesicular protein calcyon</fullName>
    </recommendedName>
</protein>
<sequence length="217" mass="23434">MVKLGCSFSGKPGKDPGDQDGAAMDSVPLISPLDISQLQPPLPDQVVIKTQTEYQLSSPDQQNFPDLEGQRLNCSHPEEGRRLPTARMIAFAMALLGCVLIMYKAIWYDQFTCPDGFLLRHKICTPLTLEMYYTEMDPERHRSILAAIGAYPLSRKHGTETPAAWGDGYRAAKEERKGPTQAGAAAAATEPPGKPSAKAEKEAARKAAGSAAPPPAQ</sequence>
<proteinExistence type="evidence at protein level"/>
<evidence type="ECO:0000255" key="1"/>
<evidence type="ECO:0000256" key="2">
    <source>
        <dbReference type="SAM" id="MobiDB-lite"/>
    </source>
</evidence>
<evidence type="ECO:0000269" key="3">
    <source>
    </source>
</evidence>
<evidence type="ECO:0000269" key="4">
    <source>
    </source>
</evidence>
<evidence type="ECO:0000305" key="5"/>
<evidence type="ECO:0000305" key="6">
    <source>
    </source>
</evidence>
<evidence type="ECO:0000305" key="7">
    <source>
    </source>
</evidence>
<evidence type="ECO:0000305" key="8">
    <source>
    </source>
</evidence>
<keyword id="KW-0025">Alternative splicing</keyword>
<keyword id="KW-1003">Cell membrane</keyword>
<keyword id="KW-0968">Cytoplasmic vesicle</keyword>
<keyword id="KW-0254">Endocytosis</keyword>
<keyword id="KW-0325">Glycoprotein</keyword>
<keyword id="KW-0472">Membrane</keyword>
<keyword id="KW-1267">Proteomics identification</keyword>
<keyword id="KW-1185">Reference proteome</keyword>
<keyword id="KW-0812">Transmembrane</keyword>
<keyword id="KW-1133">Transmembrane helix</keyword>
<feature type="chain" id="PRO_0000164368" description="Neuron-specific vesicular protein calcyon">
    <location>
        <begin position="1"/>
        <end position="217"/>
    </location>
</feature>
<feature type="topological domain" description="Extracellular" evidence="1">
    <location>
        <begin position="1"/>
        <end position="87"/>
    </location>
</feature>
<feature type="transmembrane region" description="Helical" evidence="1">
    <location>
        <begin position="88"/>
        <end position="108"/>
    </location>
</feature>
<feature type="topological domain" description="Cytoplasmic" evidence="1">
    <location>
        <begin position="109"/>
        <end position="217"/>
    </location>
</feature>
<feature type="region of interest" description="Disordered" evidence="2">
    <location>
        <begin position="1"/>
        <end position="25"/>
    </location>
</feature>
<feature type="region of interest" description="Disordered" evidence="2">
    <location>
        <begin position="162"/>
        <end position="217"/>
    </location>
</feature>
<feature type="glycosylation site" description="N-linked (GlcNAc...) asparagine" evidence="5">
    <location>
        <position position="73"/>
    </location>
</feature>
<feature type="splice variant" id="VSP_034473" description="In isoform 3." evidence="5">
    <original>LPTARMIAFAMALLGCVLIMYKAIWYDQFTCPDGFLLRHKICTPLTLEMYYTEMDPERHRSILAAIGAYPLSRKHGTETPAAWGDGYRAAKEERKGPTQAGAAAAATEPPGKPSAKAEKEAARKAAGSAAPPPAQ</original>
    <variation>VTTPTPPTVGTQDRRRRWKAAGGAWVPSRPVWGPLALREERVAVSHPAQSWPHRLPCTHQAPSRGCRCRLTKQWRS</variation>
    <location>
        <begin position="83"/>
        <end position="217"/>
    </location>
</feature>
<feature type="splice variant" id="VSP_034474" description="In isoform 2." evidence="5">
    <original>HKIC</original>
    <variation>GPEF</variation>
    <location>
        <begin position="121"/>
        <end position="124"/>
    </location>
</feature>
<feature type="splice variant" id="VSP_034475" description="In isoform 2." evidence="5">
    <location>
        <begin position="125"/>
        <end position="217"/>
    </location>
</feature>
<dbReference type="EMBL" id="AF225903">
    <property type="protein sequence ID" value="AAF34714.1"/>
    <property type="molecule type" value="mRNA"/>
</dbReference>
<dbReference type="EMBL" id="AL360181">
    <property type="status" value="NOT_ANNOTATED_CDS"/>
    <property type="molecule type" value="Genomic_DNA"/>
</dbReference>
<dbReference type="EMBL" id="CH471211">
    <property type="protein sequence ID" value="EAW61334.1"/>
    <property type="molecule type" value="Genomic_DNA"/>
</dbReference>
<dbReference type="EMBL" id="BC038978">
    <property type="protein sequence ID" value="AAH38978.1"/>
    <property type="molecule type" value="mRNA"/>
</dbReference>
<dbReference type="CCDS" id="CCDS7678.1">
    <molecule id="Q9NYX4-1"/>
</dbReference>
<dbReference type="RefSeq" id="NP_056537.1">
    <molecule id="Q9NYX4-1"/>
    <property type="nucleotide sequence ID" value="NM_015722.4"/>
</dbReference>
<dbReference type="BioGRID" id="119105">
    <property type="interactions" value="3"/>
</dbReference>
<dbReference type="FunCoup" id="Q9NYX4">
    <property type="interactions" value="158"/>
</dbReference>
<dbReference type="IntAct" id="Q9NYX4">
    <property type="interactions" value="5"/>
</dbReference>
<dbReference type="STRING" id="9606.ENSP00000252939"/>
<dbReference type="DrugBank" id="DB05419">
    <property type="generic name" value="ADX-10061"/>
</dbReference>
<dbReference type="DrugBank" id="DB00363">
    <property type="generic name" value="Clozapine"/>
</dbReference>
<dbReference type="DrugBank" id="DB05432">
    <property type="generic name" value="DAS-431 IV"/>
</dbReference>
<dbReference type="DrugBank" id="DB00831">
    <property type="generic name" value="Trifluoperazine"/>
</dbReference>
<dbReference type="GlyCosmos" id="Q9NYX4">
    <property type="glycosylation" value="1 site, No reported glycans"/>
</dbReference>
<dbReference type="GlyGen" id="Q9NYX4">
    <property type="glycosylation" value="1 site"/>
</dbReference>
<dbReference type="iPTMnet" id="Q9NYX4"/>
<dbReference type="PhosphoSitePlus" id="Q9NYX4"/>
<dbReference type="BioMuta" id="CALY"/>
<dbReference type="DMDM" id="17374622"/>
<dbReference type="MassIVE" id="Q9NYX4"/>
<dbReference type="PaxDb" id="9606-ENSP00000252939"/>
<dbReference type="PeptideAtlas" id="Q9NYX4"/>
<dbReference type="ProteomicsDB" id="83295">
    <molecule id="Q9NYX4-1"/>
</dbReference>
<dbReference type="Antibodypedia" id="32650">
    <property type="antibodies" value="95 antibodies from 27 providers"/>
</dbReference>
<dbReference type="DNASU" id="50632"/>
<dbReference type="Ensembl" id="ENST00000252939.9">
    <molecule id="Q9NYX4-1"/>
    <property type="protein sequence ID" value="ENSP00000252939.4"/>
    <property type="gene ID" value="ENSG00000130643.9"/>
</dbReference>
<dbReference type="Ensembl" id="ENST00000368555.3">
    <molecule id="Q9NYX4-3"/>
    <property type="protein sequence ID" value="ENSP00000357543.3"/>
    <property type="gene ID" value="ENSG00000130643.9"/>
</dbReference>
<dbReference type="Ensembl" id="ENST00000368558.1">
    <molecule id="Q9NYX4-2"/>
    <property type="protein sequence ID" value="ENSP00000357546.1"/>
    <property type="gene ID" value="ENSG00000130643.9"/>
</dbReference>
<dbReference type="GeneID" id="50632"/>
<dbReference type="KEGG" id="hsa:50632"/>
<dbReference type="MANE-Select" id="ENST00000252939.9">
    <property type="protein sequence ID" value="ENSP00000252939.4"/>
    <property type="RefSeq nucleotide sequence ID" value="NM_015722.4"/>
    <property type="RefSeq protein sequence ID" value="NP_056537.1"/>
</dbReference>
<dbReference type="UCSC" id="uc001lmo.3">
    <molecule id="Q9NYX4-1"/>
    <property type="organism name" value="human"/>
</dbReference>
<dbReference type="AGR" id="HGNC:17938"/>
<dbReference type="CTD" id="50632"/>
<dbReference type="DisGeNET" id="50632"/>
<dbReference type="GeneCards" id="CALY"/>
<dbReference type="HGNC" id="HGNC:17938">
    <property type="gene designation" value="CALY"/>
</dbReference>
<dbReference type="HPA" id="ENSG00000130643">
    <property type="expression patterns" value="Group enriched (brain, pituitary gland)"/>
</dbReference>
<dbReference type="MIM" id="604647">
    <property type="type" value="gene"/>
</dbReference>
<dbReference type="neXtProt" id="NX_Q9NYX4"/>
<dbReference type="OpenTargets" id="ENSG00000130643"/>
<dbReference type="PharmGKB" id="PA162380987"/>
<dbReference type="VEuPathDB" id="HostDB:ENSG00000130643"/>
<dbReference type="eggNOG" id="ENOG502QW2S">
    <property type="taxonomic scope" value="Eukaryota"/>
</dbReference>
<dbReference type="GeneTree" id="ENSGT00390000000483"/>
<dbReference type="HOGENOM" id="CLU_112085_1_0_1"/>
<dbReference type="InParanoid" id="Q9NYX4"/>
<dbReference type="OMA" id="ILKQKHC"/>
<dbReference type="OrthoDB" id="9866545at2759"/>
<dbReference type="PAN-GO" id="Q9NYX4">
    <property type="GO annotations" value="5 GO annotations based on evolutionary models"/>
</dbReference>
<dbReference type="PhylomeDB" id="Q9NYX4"/>
<dbReference type="TreeFam" id="TF332232"/>
<dbReference type="PathwayCommons" id="Q9NYX4"/>
<dbReference type="SignaLink" id="Q9NYX4"/>
<dbReference type="BioGRID-ORCS" id="50632">
    <property type="hits" value="13 hits in 1151 CRISPR screens"/>
</dbReference>
<dbReference type="ChiTaRS" id="CALY">
    <property type="organism name" value="human"/>
</dbReference>
<dbReference type="GeneWiki" id="DRD1IP"/>
<dbReference type="GenomeRNAi" id="50632"/>
<dbReference type="Pharos" id="Q9NYX4">
    <property type="development level" value="Tbio"/>
</dbReference>
<dbReference type="PRO" id="PR:Q9NYX4"/>
<dbReference type="Proteomes" id="UP000005640">
    <property type="component" value="Chromosome 10"/>
</dbReference>
<dbReference type="RNAct" id="Q9NYX4">
    <property type="molecule type" value="protein"/>
</dbReference>
<dbReference type="Bgee" id="ENSG00000130643">
    <property type="expression patterns" value="Expressed in nucleus accumbens and 124 other cell types or tissues"/>
</dbReference>
<dbReference type="GO" id="GO:0031410">
    <property type="term" value="C:cytoplasmic vesicle"/>
    <property type="evidence" value="ECO:0000314"/>
    <property type="project" value="UniProtKB"/>
</dbReference>
<dbReference type="GO" id="GO:0030659">
    <property type="term" value="C:cytoplasmic vesicle membrane"/>
    <property type="evidence" value="ECO:0007669"/>
    <property type="project" value="UniProtKB-SubCell"/>
</dbReference>
<dbReference type="GO" id="GO:0005768">
    <property type="term" value="C:endosome"/>
    <property type="evidence" value="ECO:0000318"/>
    <property type="project" value="GO_Central"/>
</dbReference>
<dbReference type="GO" id="GO:0098978">
    <property type="term" value="C:glutamatergic synapse"/>
    <property type="evidence" value="ECO:0007669"/>
    <property type="project" value="Ensembl"/>
</dbReference>
<dbReference type="GO" id="GO:0016020">
    <property type="term" value="C:membrane"/>
    <property type="evidence" value="ECO:0000318"/>
    <property type="project" value="GO_Central"/>
</dbReference>
<dbReference type="GO" id="GO:0005886">
    <property type="term" value="C:plasma membrane"/>
    <property type="evidence" value="ECO:0000314"/>
    <property type="project" value="UniProtKB"/>
</dbReference>
<dbReference type="GO" id="GO:0098843">
    <property type="term" value="C:postsynaptic endocytic zone"/>
    <property type="evidence" value="ECO:0000314"/>
    <property type="project" value="SynGO"/>
</dbReference>
<dbReference type="GO" id="GO:0032051">
    <property type="term" value="F:clathrin light chain binding"/>
    <property type="evidence" value="ECO:0000314"/>
    <property type="project" value="UniProtKB"/>
</dbReference>
<dbReference type="GO" id="GO:0048268">
    <property type="term" value="P:clathrin coat assembly"/>
    <property type="evidence" value="ECO:0000314"/>
    <property type="project" value="UniProtKB"/>
</dbReference>
<dbReference type="GO" id="GO:0016197">
    <property type="term" value="P:endosomal transport"/>
    <property type="evidence" value="ECO:0000318"/>
    <property type="project" value="GO_Central"/>
</dbReference>
<dbReference type="GO" id="GO:0045807">
    <property type="term" value="P:positive regulation of endocytosis"/>
    <property type="evidence" value="ECO:0000315"/>
    <property type="project" value="UniProtKB"/>
</dbReference>
<dbReference type="GO" id="GO:0098884">
    <property type="term" value="P:postsynaptic neurotransmitter receptor internalization"/>
    <property type="evidence" value="ECO:0007669"/>
    <property type="project" value="Ensembl"/>
</dbReference>
<dbReference type="InterPro" id="IPR009431">
    <property type="entry name" value="NSG"/>
</dbReference>
<dbReference type="PANTHER" id="PTHR28546:SF1">
    <property type="entry name" value="NEURON-SPECIFIC VESICULAR PROTEIN CALCYON"/>
    <property type="match status" value="1"/>
</dbReference>
<dbReference type="PANTHER" id="PTHR28546">
    <property type="entry name" value="NEURONAL VESICLE TRAFFICKING-ASSOCIATED PROTEIN 2-RELATED"/>
    <property type="match status" value="1"/>
</dbReference>
<dbReference type="Pfam" id="PF06387">
    <property type="entry name" value="Calcyon"/>
    <property type="match status" value="1"/>
</dbReference>
<dbReference type="PIRSF" id="PIRSF002383">
    <property type="entry name" value="Calcyon"/>
    <property type="match status" value="1"/>
</dbReference>
<organism>
    <name type="scientific">Homo sapiens</name>
    <name type="common">Human</name>
    <dbReference type="NCBI Taxonomy" id="9606"/>
    <lineage>
        <taxon>Eukaryota</taxon>
        <taxon>Metazoa</taxon>
        <taxon>Chordata</taxon>
        <taxon>Craniata</taxon>
        <taxon>Vertebrata</taxon>
        <taxon>Euteleostomi</taxon>
        <taxon>Mammalia</taxon>
        <taxon>Eutheria</taxon>
        <taxon>Euarchontoglires</taxon>
        <taxon>Primates</taxon>
        <taxon>Haplorrhini</taxon>
        <taxon>Catarrhini</taxon>
        <taxon>Hominidae</taxon>
        <taxon>Homo</taxon>
    </lineage>
</organism>
<accession>Q9NYX4</accession>
<accession>Q5VWX3</accession>
<accession>Q5VWY5</accession>
<accession>Q5VWY6</accession>
<gene>
    <name type="primary">CALY</name>
    <name type="synonym">DRD1IP</name>
</gene>